<gene>
    <name type="primary">Prkcq</name>
    <name type="synonym">Pkcq</name>
</gene>
<proteinExistence type="evidence at protein level"/>
<comment type="function">
    <text evidence="1 2 10">Calcium-independent, phospholipid- and diacylglycerol (DAG)-dependent serine/threonine-protein kinase that mediates non-redundant functions in T-cell receptor (TCR) signaling, including T-cells activation, proliferation, differentiation and survival, by mediating activation of multiple transcription factors such as NF-kappa-B, JUN, NFATC1 and NFATC2. In TCR-CD3/CD28-co-stimulated T-cells, is required for the activation of NF-kappa-B and JUN, which in turn are essential for IL2 production, and participates in the calcium-dependent NFATC1 and NFATC2 transactivation. Mediates the activation of the canonical NF-kappa-B pathway (NFKB1) by direct phosphorylation of CARD11 on several serine residues, inducing CARD11 association with lipid rafts and recruitment of the BCL10-MALT1 complex, which then activates IKK complex, resulting in nuclear translocation and activation of NFKB1. May also play an indirect role in activation of the non-canonical NF-kappa-B (NFKB2) pathway. In the signaling pathway leading to JUN activation, acts by phosphorylating the mediator STK39/SPAK and may not act through MAP kinases signaling. Plays a critical role in TCR/CD28-induced NFATC1 and NFATC2 transactivation by participating in the regulation of reduced inositol 1,4,5-trisphosphate generation and intracellular calcium mobilization. After costimulation of T-cells through CD28 can phosphorylate CBLB and is required for the ubiquitination and subsequent degradation of CBLB, which is a prerequisite for the activation of TCR. During T-cells differentiation, plays an important role in the development of T-helper 2 (Th2) cells following immune and inflammatory responses, and, in the development of inflammatory autoimmune diseases, is necessary for the activation of IL17-producing Th17 cells. May play a minor role in Th1 response. Upon TCR stimulation, mediates T-cell protective survival signal by phosphorylating BAD, thus protecting T-cells from BAD-induced apoptosis, and by up-regulating BCL-X(L)/BCL2L1 levels through NF-kappa-B and JUN pathways. In platelets, regulates signal transduction downstream of the ITGA2B, CD36/GP4, F2R/PAR1 and F2RL3/PAR4 receptors, playing a positive role in 'outside-in' signaling and granule secretion signal transduction. May relay signals from the activated ITGA2B receptor by regulating the uncoupling of WASP and WIPF1, thereby permitting the regulation of actin filament nucleation and branching activity of the Arp2/3 complex. May mediate inhibitory effects of free fatty acids on insulin signaling by phosphorylating IRS1, which in turn blocks IRS1 tyrosine phosphorylation and downstream activation of the PI3K/AKT pathway. Phosphorylates MSN (moesin) in the presence of phosphatidylglycerol or phosphatidylinositol (By similarity). Phosphorylates PDPK1 at 'Ser-504' and 'Ser-532' and negatively regulates its ability to phosphorylate PKB/AKT1 (By similarity). Phosphorylates CCDC88A/GIV and inhibits its guanine nucleotide exchange factor activity (By similarity). Phosphorylates and activates LRRK1, which phosphorylates RAB proteins involved in intracellular trafficking (By similarity).</text>
</comment>
<comment type="catalytic activity">
    <reaction evidence="2">
        <text>L-seryl-[protein] + ATP = O-phospho-L-seryl-[protein] + ADP + H(+)</text>
        <dbReference type="Rhea" id="RHEA:17989"/>
        <dbReference type="Rhea" id="RHEA-COMP:9863"/>
        <dbReference type="Rhea" id="RHEA-COMP:11604"/>
        <dbReference type="ChEBI" id="CHEBI:15378"/>
        <dbReference type="ChEBI" id="CHEBI:29999"/>
        <dbReference type="ChEBI" id="CHEBI:30616"/>
        <dbReference type="ChEBI" id="CHEBI:83421"/>
        <dbReference type="ChEBI" id="CHEBI:456216"/>
        <dbReference type="EC" id="2.7.11.13"/>
    </reaction>
</comment>
<comment type="catalytic activity">
    <reaction evidence="2">
        <text>L-threonyl-[protein] + ATP = O-phospho-L-threonyl-[protein] + ADP + H(+)</text>
        <dbReference type="Rhea" id="RHEA:46608"/>
        <dbReference type="Rhea" id="RHEA-COMP:11060"/>
        <dbReference type="Rhea" id="RHEA-COMP:11605"/>
        <dbReference type="ChEBI" id="CHEBI:15378"/>
        <dbReference type="ChEBI" id="CHEBI:30013"/>
        <dbReference type="ChEBI" id="CHEBI:30616"/>
        <dbReference type="ChEBI" id="CHEBI:61977"/>
        <dbReference type="ChEBI" id="CHEBI:456216"/>
        <dbReference type="EC" id="2.7.11.13"/>
    </reaction>
</comment>
<comment type="cofactor">
    <cofactor>
        <name>Mg(2+)</name>
        <dbReference type="ChEBI" id="CHEBI:18420"/>
    </cofactor>
</comment>
<comment type="activity regulation">
    <text evidence="1">Novel PKCs (PRKCD, PRKCE, PRKCH and PRKCQ) are calcium-insensitive, but activated by diacylglycerol (DAG) and phosphatidylserine. Three specific sites; Thr-538 (activation loop of the kinase domain), Ser-676 (turn motif) and Ser-695 (hydrophobic region), need to be phosphorylated for its full activation (By similarity).</text>
</comment>
<comment type="subunit">
    <text evidence="2 9">Part of a membrane raft complex composed at least of BCL10, CARD11, MALT1 and IKBKB (By similarity). Interacts with GLRX3 (via N-terminus) (PubMed:18479680). Interacts with ECT2 (By similarity). Interacts with CCDC88A/GIV; the interaction leads to phosphorylation of CCDC88A and inhibition of its guanine nucleotide exchange factor activity (By similarity). Interacts with CD28 (By similarity).</text>
</comment>
<comment type="subcellular location">
    <subcellularLocation>
        <location evidence="1">Cytoplasm</location>
    </subcellularLocation>
    <subcellularLocation>
        <location evidence="1">Cell membrane</location>
        <topology>Peripheral membrane protein</topology>
    </subcellularLocation>
    <text evidence="1">In resting T-cells, mostly localized in cytoplasm. In response to TCR stimulation, associates with lipid rafts and then localizes in the immunological synapse (By similarity).</text>
</comment>
<comment type="domain">
    <text>The C1 domain, containing the phorbol ester/DAG-type region 1 (C1A) and 2 (C1B), is the diacylglycerol sensor and the C2 domain is a non-calcium binding domain.</text>
</comment>
<comment type="PTM">
    <text evidence="1">Autophosphorylation at Thr-219 is required for targeting to the TCR and cellular function of PRKCQ upon antigen receptor ligation. Following TCR stimulation, phosphorylated at Tyr-90 and Ser-685 (By similarity).</text>
</comment>
<comment type="similarity">
    <text evidence="11">Belongs to the protein kinase superfamily. AGC Ser/Thr protein kinase family. PKC subfamily.</text>
</comment>
<organism>
    <name type="scientific">Rattus norvegicus</name>
    <name type="common">Rat</name>
    <dbReference type="NCBI Taxonomy" id="10116"/>
    <lineage>
        <taxon>Eukaryota</taxon>
        <taxon>Metazoa</taxon>
        <taxon>Chordata</taxon>
        <taxon>Craniata</taxon>
        <taxon>Vertebrata</taxon>
        <taxon>Euteleostomi</taxon>
        <taxon>Mammalia</taxon>
        <taxon>Eutheria</taxon>
        <taxon>Euarchontoglires</taxon>
        <taxon>Glires</taxon>
        <taxon>Rodentia</taxon>
        <taxon>Myomorpha</taxon>
        <taxon>Muroidea</taxon>
        <taxon>Muridae</taxon>
        <taxon>Murinae</taxon>
        <taxon>Rattus</taxon>
    </lineage>
</organism>
<dbReference type="EC" id="2.7.11.13" evidence="2"/>
<dbReference type="EMBL" id="AABR03106275">
    <property type="status" value="NOT_ANNOTATED_CDS"/>
    <property type="molecule type" value="Genomic_DNA"/>
</dbReference>
<dbReference type="EMBL" id="AABR03107517">
    <property type="status" value="NOT_ANNOTATED_CDS"/>
    <property type="molecule type" value="Genomic_DNA"/>
</dbReference>
<dbReference type="EMBL" id="AABR03106934">
    <property type="status" value="NOT_ANNOTATED_CDS"/>
    <property type="molecule type" value="Genomic_DNA"/>
</dbReference>
<dbReference type="EMBL" id="AABR03106283">
    <property type="status" value="NOT_ANNOTATED_CDS"/>
    <property type="molecule type" value="Genomic_DNA"/>
</dbReference>
<dbReference type="EMBL" id="AABR03107733">
    <property type="status" value="NOT_ANNOTATED_CDS"/>
    <property type="molecule type" value="Genomic_DNA"/>
</dbReference>
<dbReference type="EMBL" id="AABR03106804">
    <property type="status" value="NOT_ANNOTATED_CDS"/>
    <property type="molecule type" value="Genomic_DNA"/>
</dbReference>
<dbReference type="EMBL" id="AABR03108584">
    <property type="status" value="NOT_ANNOTATED_CDS"/>
    <property type="molecule type" value="Genomic_DNA"/>
</dbReference>
<dbReference type="EMBL" id="AABR03106764">
    <property type="status" value="NOT_ANNOTATED_CDS"/>
    <property type="molecule type" value="Genomic_DNA"/>
</dbReference>
<dbReference type="EMBL" id="AB020614">
    <property type="protein sequence ID" value="BAA78371.1"/>
    <property type="molecule type" value="mRNA"/>
</dbReference>
<dbReference type="SMR" id="Q9WTQ0"/>
<dbReference type="FunCoup" id="Q9WTQ0">
    <property type="interactions" value="517"/>
</dbReference>
<dbReference type="IntAct" id="Q9WTQ0">
    <property type="interactions" value="2"/>
</dbReference>
<dbReference type="STRING" id="10116.ENSRNOP00000025902"/>
<dbReference type="BindingDB" id="Q9WTQ0"/>
<dbReference type="ChEMBL" id="CHEMBL2094266"/>
<dbReference type="DrugCentral" id="Q9WTQ0"/>
<dbReference type="GlyGen" id="Q9WTQ0">
    <property type="glycosylation" value="2 sites, 1 O-linked glycan (1 site)"/>
</dbReference>
<dbReference type="iPTMnet" id="Q9WTQ0"/>
<dbReference type="PhosphoSitePlus" id="Q9WTQ0"/>
<dbReference type="PaxDb" id="10116-ENSRNOP00000025902"/>
<dbReference type="UCSC" id="RGD:620968">
    <property type="organism name" value="rat"/>
</dbReference>
<dbReference type="AGR" id="RGD:620968"/>
<dbReference type="RGD" id="620968">
    <property type="gene designation" value="Prkcq"/>
</dbReference>
<dbReference type="eggNOG" id="KOG0694">
    <property type="taxonomic scope" value="Eukaryota"/>
</dbReference>
<dbReference type="InParanoid" id="Q9WTQ0"/>
<dbReference type="PhylomeDB" id="Q9WTQ0"/>
<dbReference type="Reactome" id="R-RNO-111465">
    <property type="pathway name" value="Apoptotic cleavage of cellular proteins"/>
</dbReference>
<dbReference type="Reactome" id="R-RNO-114508">
    <property type="pathway name" value="Effects of PIP2 hydrolysis"/>
</dbReference>
<dbReference type="Reactome" id="R-RNO-202424">
    <property type="pathway name" value="Downstream TCR signaling"/>
</dbReference>
<dbReference type="Reactome" id="R-RNO-2871837">
    <property type="pathway name" value="FCERI mediated NF-kB activation"/>
</dbReference>
<dbReference type="Reactome" id="R-RNO-373752">
    <property type="pathway name" value="Netrin-1 signaling"/>
</dbReference>
<dbReference type="Reactome" id="R-RNO-9648002">
    <property type="pathway name" value="RAS processing"/>
</dbReference>
<dbReference type="PRO" id="PR:Q9WTQ0"/>
<dbReference type="Proteomes" id="UP000002494">
    <property type="component" value="Unplaced"/>
</dbReference>
<dbReference type="GO" id="GO:0005737">
    <property type="term" value="C:cytoplasm"/>
    <property type="evidence" value="ECO:0000266"/>
    <property type="project" value="RGD"/>
</dbReference>
<dbReference type="GO" id="GO:0001772">
    <property type="term" value="C:immunological synapse"/>
    <property type="evidence" value="ECO:0000266"/>
    <property type="project" value="RGD"/>
</dbReference>
<dbReference type="GO" id="GO:0031594">
    <property type="term" value="C:neuromuscular junction"/>
    <property type="evidence" value="ECO:0000314"/>
    <property type="project" value="RGD"/>
</dbReference>
<dbReference type="GO" id="GO:0005886">
    <property type="term" value="C:plasma membrane"/>
    <property type="evidence" value="ECO:0000266"/>
    <property type="project" value="RGD"/>
</dbReference>
<dbReference type="GO" id="GO:0042383">
    <property type="term" value="C:sarcolemma"/>
    <property type="evidence" value="ECO:0000314"/>
    <property type="project" value="RGD"/>
</dbReference>
<dbReference type="GO" id="GO:0005524">
    <property type="term" value="F:ATP binding"/>
    <property type="evidence" value="ECO:0007669"/>
    <property type="project" value="UniProtKB-KW"/>
</dbReference>
<dbReference type="GO" id="GO:0004697">
    <property type="term" value="F:diacylglycerol-dependent serine/threonine kinase activity"/>
    <property type="evidence" value="ECO:0000266"/>
    <property type="project" value="RGD"/>
</dbReference>
<dbReference type="GO" id="GO:0004672">
    <property type="term" value="F:protein kinase activity"/>
    <property type="evidence" value="ECO:0000266"/>
    <property type="project" value="RGD"/>
</dbReference>
<dbReference type="GO" id="GO:0106310">
    <property type="term" value="F:protein serine kinase activity"/>
    <property type="evidence" value="ECO:0007669"/>
    <property type="project" value="RHEA"/>
</dbReference>
<dbReference type="GO" id="GO:0004674">
    <property type="term" value="F:protein serine/threonine kinase activity"/>
    <property type="evidence" value="ECO:0000314"/>
    <property type="project" value="RGD"/>
</dbReference>
<dbReference type="GO" id="GO:0008270">
    <property type="term" value="F:zinc ion binding"/>
    <property type="evidence" value="ECO:0007669"/>
    <property type="project" value="UniProtKB-KW"/>
</dbReference>
<dbReference type="GO" id="GO:0035739">
    <property type="term" value="P:CD4-positive, alpha-beta T cell proliferation"/>
    <property type="evidence" value="ECO:0000266"/>
    <property type="project" value="RGD"/>
</dbReference>
<dbReference type="GO" id="GO:0060326">
    <property type="term" value="P:cell chemotaxis"/>
    <property type="evidence" value="ECO:0000266"/>
    <property type="project" value="RGD"/>
</dbReference>
<dbReference type="GO" id="GO:0006954">
    <property type="term" value="P:inflammatory response"/>
    <property type="evidence" value="ECO:0007669"/>
    <property type="project" value="UniProtKB-KW"/>
</dbReference>
<dbReference type="GO" id="GO:0035556">
    <property type="term" value="P:intracellular signal transduction"/>
    <property type="evidence" value="ECO:0000314"/>
    <property type="project" value="RGD"/>
</dbReference>
<dbReference type="GO" id="GO:0006509">
    <property type="term" value="P:membrane protein ectodomain proteolysis"/>
    <property type="evidence" value="ECO:0000266"/>
    <property type="project" value="RGD"/>
</dbReference>
<dbReference type="GO" id="GO:0046627">
    <property type="term" value="P:negative regulation of insulin receptor signaling pathway"/>
    <property type="evidence" value="ECO:0000250"/>
    <property type="project" value="UniProtKB"/>
</dbReference>
<dbReference type="GO" id="GO:0070233">
    <property type="term" value="P:negative regulation of T cell apoptotic process"/>
    <property type="evidence" value="ECO:0000250"/>
    <property type="project" value="UniProtKB"/>
</dbReference>
<dbReference type="GO" id="GO:0030182">
    <property type="term" value="P:neuron differentiation"/>
    <property type="evidence" value="ECO:0000270"/>
    <property type="project" value="RGD"/>
</dbReference>
<dbReference type="GO" id="GO:2000563">
    <property type="term" value="P:positive regulation of CD4-positive, alpha-beta T cell proliferation"/>
    <property type="evidence" value="ECO:0000266"/>
    <property type="project" value="RGD"/>
</dbReference>
<dbReference type="GO" id="GO:0051491">
    <property type="term" value="P:positive regulation of filopodium assembly"/>
    <property type="evidence" value="ECO:0000315"/>
    <property type="project" value="RGD"/>
</dbReference>
<dbReference type="GO" id="GO:0032740">
    <property type="term" value="P:positive regulation of interleukin-17 production"/>
    <property type="evidence" value="ECO:0000250"/>
    <property type="project" value="UniProtKB"/>
</dbReference>
<dbReference type="GO" id="GO:0032743">
    <property type="term" value="P:positive regulation of interleukin-2 production"/>
    <property type="evidence" value="ECO:0000266"/>
    <property type="project" value="RGD"/>
</dbReference>
<dbReference type="GO" id="GO:0032753">
    <property type="term" value="P:positive regulation of interleukin-4 production"/>
    <property type="evidence" value="ECO:0000250"/>
    <property type="project" value="UniProtKB"/>
</dbReference>
<dbReference type="GO" id="GO:0051092">
    <property type="term" value="P:positive regulation of NF-kappaB transcription factor activity"/>
    <property type="evidence" value="ECO:0000250"/>
    <property type="project" value="UniProtKB"/>
</dbReference>
<dbReference type="GO" id="GO:0042307">
    <property type="term" value="P:positive regulation of protein import into nucleus"/>
    <property type="evidence" value="ECO:0000315"/>
    <property type="project" value="RGD"/>
</dbReference>
<dbReference type="GO" id="GO:0050714">
    <property type="term" value="P:positive regulation of protein secretion"/>
    <property type="evidence" value="ECO:0000314"/>
    <property type="project" value="RGD"/>
</dbReference>
<dbReference type="GO" id="GO:0051496">
    <property type="term" value="P:positive regulation of stress fiber assembly"/>
    <property type="evidence" value="ECO:0000315"/>
    <property type="project" value="RGD"/>
</dbReference>
<dbReference type="GO" id="GO:0050870">
    <property type="term" value="P:positive regulation of T cell activation"/>
    <property type="evidence" value="ECO:0000250"/>
    <property type="project" value="UniProtKB"/>
</dbReference>
<dbReference type="GO" id="GO:2000318">
    <property type="term" value="P:positive regulation of T-helper 17 type immune response"/>
    <property type="evidence" value="ECO:0000250"/>
    <property type="project" value="UniProtKB"/>
</dbReference>
<dbReference type="GO" id="GO:2000570">
    <property type="term" value="P:positive regulation of T-helper 2 cell activation"/>
    <property type="evidence" value="ECO:0000250"/>
    <property type="project" value="UniProtKB"/>
</dbReference>
<dbReference type="GO" id="GO:0032206">
    <property type="term" value="P:positive regulation of telomere maintenance"/>
    <property type="evidence" value="ECO:0000266"/>
    <property type="project" value="RGD"/>
</dbReference>
<dbReference type="GO" id="GO:0006355">
    <property type="term" value="P:regulation of DNA-templated transcription"/>
    <property type="evidence" value="ECO:0000250"/>
    <property type="project" value="UniProtKB"/>
</dbReference>
<dbReference type="GO" id="GO:0010389">
    <property type="term" value="P:regulation of G2/M transition of mitotic cell cycle"/>
    <property type="evidence" value="ECO:0000315"/>
    <property type="project" value="RGD"/>
</dbReference>
<dbReference type="GO" id="GO:0090330">
    <property type="term" value="P:regulation of platelet aggregation"/>
    <property type="evidence" value="ECO:0000250"/>
    <property type="project" value="UniProtKB"/>
</dbReference>
<dbReference type="GO" id="GO:0019229">
    <property type="term" value="P:regulation of vasoconstriction"/>
    <property type="evidence" value="ECO:0000270"/>
    <property type="project" value="RGD"/>
</dbReference>
<dbReference type="GO" id="GO:0045730">
    <property type="term" value="P:respiratory burst"/>
    <property type="evidence" value="ECO:0000270"/>
    <property type="project" value="RGD"/>
</dbReference>
<dbReference type="GO" id="GO:0009749">
    <property type="term" value="P:response to glucose"/>
    <property type="evidence" value="ECO:0000270"/>
    <property type="project" value="RGD"/>
</dbReference>
<dbReference type="GO" id="GO:0001666">
    <property type="term" value="P:response to hypoxia"/>
    <property type="evidence" value="ECO:0000270"/>
    <property type="project" value="RGD"/>
</dbReference>
<dbReference type="GO" id="GO:0032868">
    <property type="term" value="P:response to insulin"/>
    <property type="evidence" value="ECO:0000270"/>
    <property type="project" value="RGD"/>
</dbReference>
<dbReference type="GO" id="GO:0042110">
    <property type="term" value="P:T cell activation"/>
    <property type="evidence" value="ECO:0000266"/>
    <property type="project" value="RGD"/>
</dbReference>
<dbReference type="GO" id="GO:0042246">
    <property type="term" value="P:tissue regeneration"/>
    <property type="evidence" value="ECO:0000270"/>
    <property type="project" value="RGD"/>
</dbReference>
<dbReference type="CDD" id="cd20834">
    <property type="entry name" value="C1_nPKC_theta-like_rpt1"/>
    <property type="match status" value="1"/>
</dbReference>
<dbReference type="CDD" id="cd20837">
    <property type="entry name" value="C1_nPKC_theta-like_rpt2"/>
    <property type="match status" value="1"/>
</dbReference>
<dbReference type="CDD" id="cd05619">
    <property type="entry name" value="STKc_nPKC_theta"/>
    <property type="match status" value="1"/>
</dbReference>
<dbReference type="FunFam" id="3.30.200.20:FF:000360">
    <property type="entry name" value="Protein kinase C"/>
    <property type="match status" value="1"/>
</dbReference>
<dbReference type="FunFam" id="3.30.60.20:FF:000003">
    <property type="entry name" value="Protein kinase C delta"/>
    <property type="match status" value="1"/>
</dbReference>
<dbReference type="FunFam" id="2.60.40.150:FF:000049">
    <property type="entry name" value="Protein kinase C delta type"/>
    <property type="match status" value="1"/>
</dbReference>
<dbReference type="FunFam" id="3.30.60.20:FF:000008">
    <property type="entry name" value="Protein kinase C theta"/>
    <property type="match status" value="1"/>
</dbReference>
<dbReference type="FunFam" id="1.10.510.10:FF:000150">
    <property type="entry name" value="Protein kinase C, theta"/>
    <property type="match status" value="1"/>
</dbReference>
<dbReference type="Gene3D" id="3.30.60.20">
    <property type="match status" value="2"/>
</dbReference>
<dbReference type="Gene3D" id="2.60.40.150">
    <property type="entry name" value="C2 domain"/>
    <property type="match status" value="1"/>
</dbReference>
<dbReference type="Gene3D" id="3.30.200.20">
    <property type="entry name" value="Phosphorylase Kinase, domain 1"/>
    <property type="match status" value="1"/>
</dbReference>
<dbReference type="Gene3D" id="1.10.510.10">
    <property type="entry name" value="Transferase(Phosphotransferase) domain 1"/>
    <property type="match status" value="1"/>
</dbReference>
<dbReference type="InterPro" id="IPR000961">
    <property type="entry name" value="AGC-kinase_C"/>
</dbReference>
<dbReference type="InterPro" id="IPR046349">
    <property type="entry name" value="C1-like_sf"/>
</dbReference>
<dbReference type="InterPro" id="IPR000008">
    <property type="entry name" value="C2_dom"/>
</dbReference>
<dbReference type="InterPro" id="IPR035892">
    <property type="entry name" value="C2_domain_sf"/>
</dbReference>
<dbReference type="InterPro" id="IPR020454">
    <property type="entry name" value="DAG/PE-bd"/>
</dbReference>
<dbReference type="InterPro" id="IPR011009">
    <property type="entry name" value="Kinase-like_dom_sf"/>
</dbReference>
<dbReference type="InterPro" id="IPR034668">
    <property type="entry name" value="nPKC_theta"/>
</dbReference>
<dbReference type="InterPro" id="IPR002219">
    <property type="entry name" value="PE/DAG-bd"/>
</dbReference>
<dbReference type="InterPro" id="IPR027264">
    <property type="entry name" value="PKC_theta"/>
</dbReference>
<dbReference type="InterPro" id="IPR017892">
    <property type="entry name" value="Pkinase_C"/>
</dbReference>
<dbReference type="InterPro" id="IPR014376">
    <property type="entry name" value="Prot_kin_PKC_delta"/>
</dbReference>
<dbReference type="InterPro" id="IPR000719">
    <property type="entry name" value="Prot_kinase_dom"/>
</dbReference>
<dbReference type="InterPro" id="IPR017441">
    <property type="entry name" value="Protein_kinase_ATP_BS"/>
</dbReference>
<dbReference type="InterPro" id="IPR008271">
    <property type="entry name" value="Ser/Thr_kinase_AS"/>
</dbReference>
<dbReference type="PANTHER" id="PTHR24351">
    <property type="entry name" value="RIBOSOMAL PROTEIN S6 KINASE"/>
    <property type="match status" value="1"/>
</dbReference>
<dbReference type="Pfam" id="PF00130">
    <property type="entry name" value="C1_1"/>
    <property type="match status" value="2"/>
</dbReference>
<dbReference type="Pfam" id="PF21494">
    <property type="entry name" value="PKC_C2"/>
    <property type="match status" value="1"/>
</dbReference>
<dbReference type="Pfam" id="PF00069">
    <property type="entry name" value="Pkinase"/>
    <property type="match status" value="1"/>
</dbReference>
<dbReference type="Pfam" id="PF00433">
    <property type="entry name" value="Pkinase_C"/>
    <property type="match status" value="1"/>
</dbReference>
<dbReference type="PIRSF" id="PIRSF000551">
    <property type="entry name" value="PKC_delta"/>
    <property type="match status" value="1"/>
</dbReference>
<dbReference type="PIRSF" id="PIRSF501105">
    <property type="entry name" value="Protein_kin_C_theta"/>
    <property type="match status" value="1"/>
</dbReference>
<dbReference type="PRINTS" id="PR00008">
    <property type="entry name" value="DAGPEDOMAIN"/>
</dbReference>
<dbReference type="SMART" id="SM00109">
    <property type="entry name" value="C1"/>
    <property type="match status" value="2"/>
</dbReference>
<dbReference type="SMART" id="SM00133">
    <property type="entry name" value="S_TK_X"/>
    <property type="match status" value="1"/>
</dbReference>
<dbReference type="SMART" id="SM00220">
    <property type="entry name" value="S_TKc"/>
    <property type="match status" value="1"/>
</dbReference>
<dbReference type="SUPFAM" id="SSF49562">
    <property type="entry name" value="C2 domain (Calcium/lipid-binding domain, CaLB)"/>
    <property type="match status" value="1"/>
</dbReference>
<dbReference type="SUPFAM" id="SSF57889">
    <property type="entry name" value="Cysteine-rich domain"/>
    <property type="match status" value="2"/>
</dbReference>
<dbReference type="SUPFAM" id="SSF56112">
    <property type="entry name" value="Protein kinase-like (PK-like)"/>
    <property type="match status" value="1"/>
</dbReference>
<dbReference type="PROSITE" id="PS51285">
    <property type="entry name" value="AGC_KINASE_CTER"/>
    <property type="match status" value="1"/>
</dbReference>
<dbReference type="PROSITE" id="PS50004">
    <property type="entry name" value="C2"/>
    <property type="match status" value="1"/>
</dbReference>
<dbReference type="PROSITE" id="PS00107">
    <property type="entry name" value="PROTEIN_KINASE_ATP"/>
    <property type="match status" value="1"/>
</dbReference>
<dbReference type="PROSITE" id="PS50011">
    <property type="entry name" value="PROTEIN_KINASE_DOM"/>
    <property type="match status" value="1"/>
</dbReference>
<dbReference type="PROSITE" id="PS00108">
    <property type="entry name" value="PROTEIN_KINASE_ST"/>
    <property type="match status" value="1"/>
</dbReference>
<dbReference type="PROSITE" id="PS00479">
    <property type="entry name" value="ZF_DAG_PE_1"/>
    <property type="match status" value="2"/>
</dbReference>
<dbReference type="PROSITE" id="PS50081">
    <property type="entry name" value="ZF_DAG_PE_2"/>
    <property type="match status" value="2"/>
</dbReference>
<feature type="chain" id="PRO_0000270836" description="Protein kinase C theta type">
    <location>
        <begin position="1"/>
        <end position="707"/>
    </location>
</feature>
<feature type="domain" description="C2" evidence="4">
    <location>
        <begin position="1"/>
        <end position="107"/>
    </location>
</feature>
<feature type="domain" description="Protein kinase" evidence="5">
    <location>
        <begin position="380"/>
        <end position="634"/>
    </location>
</feature>
<feature type="domain" description="AGC-kinase C-terminal" evidence="7">
    <location>
        <begin position="635"/>
        <end position="706"/>
    </location>
</feature>
<feature type="zinc finger region" description="Phorbol-ester/DAG-type 1" evidence="6">
    <location>
        <begin position="159"/>
        <end position="209"/>
    </location>
</feature>
<feature type="zinc finger region" description="Phorbol-ester/DAG-type 2" evidence="6">
    <location>
        <begin position="231"/>
        <end position="281"/>
    </location>
</feature>
<feature type="active site" description="Proton acceptor" evidence="5 8">
    <location>
        <position position="504"/>
    </location>
</feature>
<feature type="binding site" evidence="5">
    <location>
        <begin position="386"/>
        <end position="394"/>
    </location>
    <ligand>
        <name>ATP</name>
        <dbReference type="ChEBI" id="CHEBI:30616"/>
    </ligand>
</feature>
<feature type="binding site" evidence="5">
    <location>
        <position position="409"/>
    </location>
    <ligand>
        <name>ATP</name>
        <dbReference type="ChEBI" id="CHEBI:30616"/>
    </ligand>
</feature>
<feature type="modified residue" description="Phosphotyrosine; by LCK" evidence="2">
    <location>
        <position position="90"/>
    </location>
</feature>
<feature type="modified residue" description="Phosphothreonine; by autocatalysis" evidence="2">
    <location>
        <position position="219"/>
    </location>
</feature>
<feature type="modified residue" description="Phosphoserine" evidence="2">
    <location>
        <position position="348"/>
    </location>
</feature>
<feature type="modified residue" description="Phosphothreonine; by PDPK1" evidence="2">
    <location>
        <position position="538"/>
    </location>
</feature>
<feature type="modified residue" description="Phosphoserine" evidence="12">
    <location>
        <position position="676"/>
    </location>
</feature>
<feature type="modified residue" description="Phosphoserine" evidence="2">
    <location>
        <position position="685"/>
    </location>
</feature>
<feature type="modified residue" description="Phosphoserine; by autocatalysis" evidence="2 3">
    <location>
        <position position="695"/>
    </location>
</feature>
<keyword id="KW-0067">ATP-binding</keyword>
<keyword id="KW-1003">Cell membrane</keyword>
<keyword id="KW-0963">Cytoplasm</keyword>
<keyword id="KW-0391">Immunity</keyword>
<keyword id="KW-0395">Inflammatory response</keyword>
<keyword id="KW-0418">Kinase</keyword>
<keyword id="KW-0460">Magnesium</keyword>
<keyword id="KW-0472">Membrane</keyword>
<keyword id="KW-0479">Metal-binding</keyword>
<keyword id="KW-0547">Nucleotide-binding</keyword>
<keyword id="KW-0597">Phosphoprotein</keyword>
<keyword id="KW-1185">Reference proteome</keyword>
<keyword id="KW-0677">Repeat</keyword>
<keyword id="KW-0723">Serine/threonine-protein kinase</keyword>
<keyword id="KW-0808">Transferase</keyword>
<keyword id="KW-0862">Zinc</keyword>
<keyword id="KW-0863">Zinc-finger</keyword>
<sequence length="707" mass="81750">MSPFLRIGLSNFDCGTCQACQGEAVNPYCAVLVKEYVESENGQMYIQKKPTMYPPWDSTFDAHINKGRVMQIIVKGKNVDLISETTVELYSLAERCRKNNGRTEIWLELKPQGRMLMNARYFLEMSDTKDMSEFENEGFFALHHRRGAIKQAKVHHVKCHEFTATFFPQPTFCSVCHEFVWGLNKQGYQCRRCNAAIHKKCIDKVIAKCTGSAINSRETMFHKERFKIDMPHRFKVYNYKSPTFCEHCGTLLWGLARQGLKCDACGMNVHHRCQTKVANLCGINQKLMAEALAMIESTQQARTLRDSEHIFREGPIEISFPRSIKSETRPPCVPTPGKSEPQGICWESPLDGADKTAQPPEPEVNLQRASLQLKLKIDDFILHKMLGKGSFGKVFLAEFKRTKQFFAIKALKKDVVLMDDDVECTMVEKRVLSLAWEHPFLTHMFCTFQTKENLFFVMEYLNGGDLMYHIQSCHKFDLSRATFYAAEVILGLQFLHSKGIVYRDLKLDNILLDRDGHIKIADFGMCKENMLGDAKTNTFCGTPDYIAPEILLGQKYNHSVDWWSFGVLLYEMLIGQSPFHGQDEEELFHSIRMDNPFYPRWLEREAKDLLVKLFVREPEKRLGVRGDIRQHPLFREINWEELERKEIDPPFRPKVKSPYDCSNFDKEFLSEKPRLSFADRALINSMDQNMFSNFSFINPGMETLICS</sequence>
<reference key="1">
    <citation type="journal article" date="2004" name="Nature">
        <title>Genome sequence of the Brown Norway rat yields insights into mammalian evolution.</title>
        <authorList>
            <person name="Gibbs R.A."/>
            <person name="Weinstock G.M."/>
            <person name="Metzker M.L."/>
            <person name="Muzny D.M."/>
            <person name="Sodergren E.J."/>
            <person name="Scherer S."/>
            <person name="Scott G."/>
            <person name="Steffen D."/>
            <person name="Worley K.C."/>
            <person name="Burch P.E."/>
            <person name="Okwuonu G."/>
            <person name="Hines S."/>
            <person name="Lewis L."/>
            <person name="Deramo C."/>
            <person name="Delgado O."/>
            <person name="Dugan-Rocha S."/>
            <person name="Miner G."/>
            <person name="Morgan M."/>
            <person name="Hawes A."/>
            <person name="Gill R."/>
            <person name="Holt R.A."/>
            <person name="Adams M.D."/>
            <person name="Amanatides P.G."/>
            <person name="Baden-Tillson H."/>
            <person name="Barnstead M."/>
            <person name="Chin S."/>
            <person name="Evans C.A."/>
            <person name="Ferriera S."/>
            <person name="Fosler C."/>
            <person name="Glodek A."/>
            <person name="Gu Z."/>
            <person name="Jennings D."/>
            <person name="Kraft C.L."/>
            <person name="Nguyen T."/>
            <person name="Pfannkoch C.M."/>
            <person name="Sitter C."/>
            <person name="Sutton G.G."/>
            <person name="Venter J.C."/>
            <person name="Woodage T."/>
            <person name="Smith D."/>
            <person name="Lee H.-M."/>
            <person name="Gustafson E."/>
            <person name="Cahill P."/>
            <person name="Kana A."/>
            <person name="Doucette-Stamm L."/>
            <person name="Weinstock K."/>
            <person name="Fechtel K."/>
            <person name="Weiss R.B."/>
            <person name="Dunn D.M."/>
            <person name="Green E.D."/>
            <person name="Blakesley R.W."/>
            <person name="Bouffard G.G."/>
            <person name="De Jong P.J."/>
            <person name="Osoegawa K."/>
            <person name="Zhu B."/>
            <person name="Marra M."/>
            <person name="Schein J."/>
            <person name="Bosdet I."/>
            <person name="Fjell C."/>
            <person name="Jones S."/>
            <person name="Krzywinski M."/>
            <person name="Mathewson C."/>
            <person name="Siddiqui A."/>
            <person name="Wye N."/>
            <person name="McPherson J."/>
            <person name="Zhao S."/>
            <person name="Fraser C.M."/>
            <person name="Shetty J."/>
            <person name="Shatsman S."/>
            <person name="Geer K."/>
            <person name="Chen Y."/>
            <person name="Abramzon S."/>
            <person name="Nierman W.C."/>
            <person name="Havlak P.H."/>
            <person name="Chen R."/>
            <person name="Durbin K.J."/>
            <person name="Egan A."/>
            <person name="Ren Y."/>
            <person name="Song X.-Z."/>
            <person name="Li B."/>
            <person name="Liu Y."/>
            <person name="Qin X."/>
            <person name="Cawley S."/>
            <person name="Cooney A.J."/>
            <person name="D'Souza L.M."/>
            <person name="Martin K."/>
            <person name="Wu J.Q."/>
            <person name="Gonzalez-Garay M.L."/>
            <person name="Jackson A.R."/>
            <person name="Kalafus K.J."/>
            <person name="McLeod M.P."/>
            <person name="Milosavljevic A."/>
            <person name="Virk D."/>
            <person name="Volkov A."/>
            <person name="Wheeler D.A."/>
            <person name="Zhang Z."/>
            <person name="Bailey J.A."/>
            <person name="Eichler E.E."/>
            <person name="Tuzun E."/>
            <person name="Birney E."/>
            <person name="Mongin E."/>
            <person name="Ureta-Vidal A."/>
            <person name="Woodwark C."/>
            <person name="Zdobnov E."/>
            <person name="Bork P."/>
            <person name="Suyama M."/>
            <person name="Torrents D."/>
            <person name="Alexandersson M."/>
            <person name="Trask B.J."/>
            <person name="Young J.M."/>
            <person name="Huang H."/>
            <person name="Wang H."/>
            <person name="Xing H."/>
            <person name="Daniels S."/>
            <person name="Gietzen D."/>
            <person name="Schmidt J."/>
            <person name="Stevens K."/>
            <person name="Vitt U."/>
            <person name="Wingrove J."/>
            <person name="Camara F."/>
            <person name="Mar Alba M."/>
            <person name="Abril J.F."/>
            <person name="Guigo R."/>
            <person name="Smit A."/>
            <person name="Dubchak I."/>
            <person name="Rubin E.M."/>
            <person name="Couronne O."/>
            <person name="Poliakov A."/>
            <person name="Huebner N."/>
            <person name="Ganten D."/>
            <person name="Goesele C."/>
            <person name="Hummel O."/>
            <person name="Kreitler T."/>
            <person name="Lee Y.-A."/>
            <person name="Monti J."/>
            <person name="Schulz H."/>
            <person name="Zimdahl H."/>
            <person name="Himmelbauer H."/>
            <person name="Lehrach H."/>
            <person name="Jacob H.J."/>
            <person name="Bromberg S."/>
            <person name="Gullings-Handley J."/>
            <person name="Jensen-Seaman M.I."/>
            <person name="Kwitek A.E."/>
            <person name="Lazar J."/>
            <person name="Pasko D."/>
            <person name="Tonellato P.J."/>
            <person name="Twigger S."/>
            <person name="Ponting C.P."/>
            <person name="Duarte J.M."/>
            <person name="Rice S."/>
            <person name="Goodstadt L."/>
            <person name="Beatson S.A."/>
            <person name="Emes R.D."/>
            <person name="Winter E.E."/>
            <person name="Webber C."/>
            <person name="Brandt P."/>
            <person name="Nyakatura G."/>
            <person name="Adetobi M."/>
            <person name="Chiaromonte F."/>
            <person name="Elnitski L."/>
            <person name="Eswara P."/>
            <person name="Hardison R.C."/>
            <person name="Hou M."/>
            <person name="Kolbe D."/>
            <person name="Makova K."/>
            <person name="Miller W."/>
            <person name="Nekrutenko A."/>
            <person name="Riemer C."/>
            <person name="Schwartz S."/>
            <person name="Taylor J."/>
            <person name="Yang S."/>
            <person name="Zhang Y."/>
            <person name="Lindpaintner K."/>
            <person name="Andrews T.D."/>
            <person name="Caccamo M."/>
            <person name="Clamp M."/>
            <person name="Clarke L."/>
            <person name="Curwen V."/>
            <person name="Durbin R.M."/>
            <person name="Eyras E."/>
            <person name="Searle S.M."/>
            <person name="Cooper G.M."/>
            <person name="Batzoglou S."/>
            <person name="Brudno M."/>
            <person name="Sidow A."/>
            <person name="Stone E.A."/>
            <person name="Payseur B.A."/>
            <person name="Bourque G."/>
            <person name="Lopez-Otin C."/>
            <person name="Puente X.S."/>
            <person name="Chakrabarti K."/>
            <person name="Chatterji S."/>
            <person name="Dewey C."/>
            <person name="Pachter L."/>
            <person name="Bray N."/>
            <person name="Yap V.B."/>
            <person name="Caspi A."/>
            <person name="Tesler G."/>
            <person name="Pevzner P.A."/>
            <person name="Haussler D."/>
            <person name="Roskin K.M."/>
            <person name="Baertsch R."/>
            <person name="Clawson H."/>
            <person name="Furey T.S."/>
            <person name="Hinrichs A.S."/>
            <person name="Karolchik D."/>
            <person name="Kent W.J."/>
            <person name="Rosenbloom K.R."/>
            <person name="Trumbower H."/>
            <person name="Weirauch M."/>
            <person name="Cooper D.N."/>
            <person name="Stenson P.D."/>
            <person name="Ma B."/>
            <person name="Brent M."/>
            <person name="Arumugam M."/>
            <person name="Shteynberg D."/>
            <person name="Copley R.R."/>
            <person name="Taylor M.S."/>
            <person name="Riethman H."/>
            <person name="Mudunuri U."/>
            <person name="Peterson J."/>
            <person name="Guyer M."/>
            <person name="Felsenfeld A."/>
            <person name="Old S."/>
            <person name="Mockrin S."/>
            <person name="Collins F.S."/>
        </authorList>
    </citation>
    <scope>NUCLEOTIDE SEQUENCE [LARGE SCALE GENOMIC DNA]</scope>
    <source>
        <strain>Brown Norway</strain>
    </source>
</reference>
<reference key="2">
    <citation type="journal article" date="2000" name="J. Mol. Neurosci.">
        <title>Localization of mRNAs for novel, atypical as well as conventional protein kinase C (PKC) isoforms in the brain of developing and mature rats.</title>
        <authorList>
            <person name="Minami H."/>
            <person name="Owada Y."/>
            <person name="Suzuki R."/>
            <person name="Handa Y."/>
            <person name="Kondo H."/>
        </authorList>
    </citation>
    <scope>NUCLEOTIDE SEQUENCE [MRNA] OF 524-667</scope>
    <source>
        <strain>Wistar</strain>
        <tissue>Brain</tissue>
    </source>
</reference>
<reference key="3">
    <citation type="journal article" date="1998" name="J. Biol. Chem.">
        <title>Protein kinase C-theta phosphorylation of moesin in the actin-binding sequence.</title>
        <authorList>
            <person name="Pietromonaco S.F."/>
            <person name="Simons P.C."/>
            <person name="Altman A."/>
            <person name="Elias L."/>
        </authorList>
    </citation>
    <scope>FUNCTION IN PHOSPHORYLATION OF MSN</scope>
</reference>
<reference key="4">
    <citation type="journal article" date="2008" name="Cell. Immunol.">
        <title>PICOT, protein kinase C theta-interacting protein, is a novel regulator of FcepsilonRI-mediated mast cell activation.</title>
        <authorList>
            <person name="Kato N."/>
            <person name="Motohashi S."/>
            <person name="Okada T."/>
            <person name="Ozawa T."/>
            <person name="Mashima K."/>
        </authorList>
    </citation>
    <scope>INTERACTION WITH GLRX3</scope>
</reference>
<reference key="5">
    <citation type="journal article" date="2012" name="Nat. Commun.">
        <title>Quantitative maps of protein phosphorylation sites across 14 different rat organs and tissues.</title>
        <authorList>
            <person name="Lundby A."/>
            <person name="Secher A."/>
            <person name="Lage K."/>
            <person name="Nordsborg N.B."/>
            <person name="Dmytriyev A."/>
            <person name="Lundby C."/>
            <person name="Olsen J.V."/>
        </authorList>
    </citation>
    <scope>PHOSPHORYLATION [LARGE SCALE ANALYSIS] AT SER-676</scope>
    <scope>IDENTIFICATION BY MASS SPECTROMETRY [LARGE SCALE ANALYSIS]</scope>
</reference>
<evidence type="ECO:0000250" key="1"/>
<evidence type="ECO:0000250" key="2">
    <source>
        <dbReference type="UniProtKB" id="Q04759"/>
    </source>
</evidence>
<evidence type="ECO:0000255" key="3"/>
<evidence type="ECO:0000255" key="4">
    <source>
        <dbReference type="PROSITE-ProRule" id="PRU00041"/>
    </source>
</evidence>
<evidence type="ECO:0000255" key="5">
    <source>
        <dbReference type="PROSITE-ProRule" id="PRU00159"/>
    </source>
</evidence>
<evidence type="ECO:0000255" key="6">
    <source>
        <dbReference type="PROSITE-ProRule" id="PRU00226"/>
    </source>
</evidence>
<evidence type="ECO:0000255" key="7">
    <source>
        <dbReference type="PROSITE-ProRule" id="PRU00618"/>
    </source>
</evidence>
<evidence type="ECO:0000255" key="8">
    <source>
        <dbReference type="PROSITE-ProRule" id="PRU10027"/>
    </source>
</evidence>
<evidence type="ECO:0000269" key="9">
    <source>
    </source>
</evidence>
<evidence type="ECO:0000269" key="10">
    <source>
    </source>
</evidence>
<evidence type="ECO:0000305" key="11"/>
<evidence type="ECO:0007744" key="12">
    <source>
    </source>
</evidence>
<protein>
    <recommendedName>
        <fullName>Protein kinase C theta type</fullName>
        <ecNumber evidence="2">2.7.11.13</ecNumber>
    </recommendedName>
    <alternativeName>
        <fullName>nPKC-theta</fullName>
    </alternativeName>
</protein>
<name>KPCT_RAT</name>
<accession>Q9WTQ0</accession>